<comment type="function">
    <text evidence="1">Catalyzes the oxidation of either pyridoxine 5'-phosphate (PNP) or pyridoxamine 5'-phosphate (PMP) into pyridoxal 5'-phosphate (PLP).</text>
</comment>
<comment type="catalytic activity">
    <reaction evidence="1">
        <text>pyridoxamine 5'-phosphate + O2 + H2O = pyridoxal 5'-phosphate + H2O2 + NH4(+)</text>
        <dbReference type="Rhea" id="RHEA:15817"/>
        <dbReference type="ChEBI" id="CHEBI:15377"/>
        <dbReference type="ChEBI" id="CHEBI:15379"/>
        <dbReference type="ChEBI" id="CHEBI:16240"/>
        <dbReference type="ChEBI" id="CHEBI:28938"/>
        <dbReference type="ChEBI" id="CHEBI:58451"/>
        <dbReference type="ChEBI" id="CHEBI:597326"/>
        <dbReference type="EC" id="1.4.3.5"/>
    </reaction>
</comment>
<comment type="catalytic activity">
    <reaction evidence="1">
        <text>pyridoxine 5'-phosphate + O2 = pyridoxal 5'-phosphate + H2O2</text>
        <dbReference type="Rhea" id="RHEA:15149"/>
        <dbReference type="ChEBI" id="CHEBI:15379"/>
        <dbReference type="ChEBI" id="CHEBI:16240"/>
        <dbReference type="ChEBI" id="CHEBI:58589"/>
        <dbReference type="ChEBI" id="CHEBI:597326"/>
        <dbReference type="EC" id="1.4.3.5"/>
    </reaction>
</comment>
<comment type="cofactor">
    <cofactor evidence="1">
        <name>FMN</name>
        <dbReference type="ChEBI" id="CHEBI:58210"/>
    </cofactor>
    <text evidence="1">Binds 1 FMN per subunit.</text>
</comment>
<comment type="pathway">
    <text evidence="1">Cofactor metabolism; pyridoxal 5'-phosphate salvage; pyridoxal 5'-phosphate from pyridoxamine 5'-phosphate: step 1/1.</text>
</comment>
<comment type="pathway">
    <text evidence="1">Cofactor metabolism; pyridoxal 5'-phosphate salvage; pyridoxal 5'-phosphate from pyridoxine 5'-phosphate: step 1/1.</text>
</comment>
<comment type="subunit">
    <text evidence="1">Homodimer.</text>
</comment>
<comment type="similarity">
    <text evidence="1">Belongs to the pyridoxamine 5'-phosphate oxidase family.</text>
</comment>
<keyword id="KW-0285">Flavoprotein</keyword>
<keyword id="KW-0288">FMN</keyword>
<keyword id="KW-0560">Oxidoreductase</keyword>
<keyword id="KW-0664">Pyridoxine biosynthesis</keyword>
<keyword id="KW-1185">Reference proteome</keyword>
<protein>
    <recommendedName>
        <fullName evidence="1">Pyridoxine/pyridoxamine 5'-phosphate oxidase</fullName>
        <ecNumber evidence="1">1.4.3.5</ecNumber>
    </recommendedName>
    <alternativeName>
        <fullName evidence="1">PNP/PMP oxidase</fullName>
        <shortName evidence="1">PNPOx</shortName>
    </alternativeName>
    <alternativeName>
        <fullName evidence="1">Pyridoxal 5'-phosphate synthase</fullName>
    </alternativeName>
</protein>
<dbReference type="EC" id="1.4.3.5" evidence="1"/>
<dbReference type="EMBL" id="AE013598">
    <property type="protein sequence ID" value="AAW74499.1"/>
    <property type="molecule type" value="Genomic_DNA"/>
</dbReference>
<dbReference type="SMR" id="Q5H3H2"/>
<dbReference type="STRING" id="291331.XOO1245"/>
<dbReference type="KEGG" id="xoo:XOO1245"/>
<dbReference type="HOGENOM" id="CLU_032263_2_3_6"/>
<dbReference type="UniPathway" id="UPA01068">
    <property type="reaction ID" value="UER00304"/>
</dbReference>
<dbReference type="UniPathway" id="UPA01068">
    <property type="reaction ID" value="UER00305"/>
</dbReference>
<dbReference type="Proteomes" id="UP000006735">
    <property type="component" value="Chromosome"/>
</dbReference>
<dbReference type="GO" id="GO:0010181">
    <property type="term" value="F:FMN binding"/>
    <property type="evidence" value="ECO:0007669"/>
    <property type="project" value="UniProtKB-UniRule"/>
</dbReference>
<dbReference type="GO" id="GO:0004733">
    <property type="term" value="F:pyridoxamine phosphate oxidase activity"/>
    <property type="evidence" value="ECO:0007669"/>
    <property type="project" value="UniProtKB-UniRule"/>
</dbReference>
<dbReference type="GO" id="GO:0008615">
    <property type="term" value="P:pyridoxine biosynthetic process"/>
    <property type="evidence" value="ECO:0007669"/>
    <property type="project" value="UniProtKB-KW"/>
</dbReference>
<dbReference type="FunFam" id="2.30.110.10:FF:000012">
    <property type="entry name" value="Predicted protein"/>
    <property type="match status" value="1"/>
</dbReference>
<dbReference type="Gene3D" id="2.30.110.10">
    <property type="entry name" value="Electron Transport, Fmn-binding Protein, Chain A"/>
    <property type="match status" value="1"/>
</dbReference>
<dbReference type="HAMAP" id="MF_01629">
    <property type="entry name" value="PdxH"/>
    <property type="match status" value="1"/>
</dbReference>
<dbReference type="InterPro" id="IPR000659">
    <property type="entry name" value="Pyridox_Oxase"/>
</dbReference>
<dbReference type="InterPro" id="IPR019740">
    <property type="entry name" value="Pyridox_Oxase_CS"/>
</dbReference>
<dbReference type="InterPro" id="IPR011576">
    <property type="entry name" value="Pyridox_Oxase_N"/>
</dbReference>
<dbReference type="InterPro" id="IPR019576">
    <property type="entry name" value="Pyridoxamine_oxidase_dimer_C"/>
</dbReference>
<dbReference type="InterPro" id="IPR012349">
    <property type="entry name" value="Split_barrel_FMN-bd"/>
</dbReference>
<dbReference type="NCBIfam" id="TIGR00558">
    <property type="entry name" value="pdxH"/>
    <property type="match status" value="1"/>
</dbReference>
<dbReference type="NCBIfam" id="NF004231">
    <property type="entry name" value="PRK05679.1"/>
    <property type="match status" value="1"/>
</dbReference>
<dbReference type="PANTHER" id="PTHR10851:SF0">
    <property type="entry name" value="PYRIDOXINE-5'-PHOSPHATE OXIDASE"/>
    <property type="match status" value="1"/>
</dbReference>
<dbReference type="PANTHER" id="PTHR10851">
    <property type="entry name" value="PYRIDOXINE-5-PHOSPHATE OXIDASE"/>
    <property type="match status" value="1"/>
</dbReference>
<dbReference type="Pfam" id="PF10590">
    <property type="entry name" value="PNP_phzG_C"/>
    <property type="match status" value="1"/>
</dbReference>
<dbReference type="Pfam" id="PF01243">
    <property type="entry name" value="PNPOx_N"/>
    <property type="match status" value="1"/>
</dbReference>
<dbReference type="PIRSF" id="PIRSF000190">
    <property type="entry name" value="Pyd_amn-ph_oxd"/>
    <property type="match status" value="1"/>
</dbReference>
<dbReference type="SUPFAM" id="SSF50475">
    <property type="entry name" value="FMN-binding split barrel"/>
    <property type="match status" value="1"/>
</dbReference>
<dbReference type="PROSITE" id="PS01064">
    <property type="entry name" value="PYRIDOX_OXIDASE"/>
    <property type="match status" value="1"/>
</dbReference>
<gene>
    <name evidence="1" type="primary">pdxH</name>
    <name type="ordered locus">XOO1245</name>
</gene>
<reference key="1">
    <citation type="journal article" date="2005" name="Nucleic Acids Res.">
        <title>The genome sequence of Xanthomonas oryzae pathovar oryzae KACC10331, the bacterial blight pathogen of rice.</title>
        <authorList>
            <person name="Lee B.-M."/>
            <person name="Park Y.-J."/>
            <person name="Park D.-S."/>
            <person name="Kang H.-W."/>
            <person name="Kim J.-G."/>
            <person name="Song E.-S."/>
            <person name="Park I.-C."/>
            <person name="Yoon U.-H."/>
            <person name="Hahn J.-H."/>
            <person name="Koo B.-S."/>
            <person name="Lee G.-B."/>
            <person name="Kim H."/>
            <person name="Park H.-S."/>
            <person name="Yoon K.-O."/>
            <person name="Kim J.-H."/>
            <person name="Jung C.-H."/>
            <person name="Koh N.-H."/>
            <person name="Seo J.-S."/>
            <person name="Go S.-J."/>
        </authorList>
    </citation>
    <scope>NUCLEOTIDE SEQUENCE [LARGE SCALE GENOMIC DNA]</scope>
    <source>
        <strain>KACC10331 / KXO85</strain>
    </source>
</reference>
<name>PDXH_XANOR</name>
<sequence length="199" mass="22201">MTDLYAEALATFAALYAEAQNSAELEASAMTLATANVDGRPSARTVLLKAFDARGFVFYSHLDSAKGRDLQTHPQAALLFLWRSLREAGIQVRIEGGVQLVSADESDAYFASRPRMSQIGAWASLQSQTLGSRAEFDAAIAKVEATFEGREVPRPEGWGGFRVVPQAFEFWYGAKFRLHERWRYEADAASHWSKRMLYP</sequence>
<accession>Q5H3H2</accession>
<proteinExistence type="inferred from homology"/>
<feature type="chain" id="PRO_0000167776" description="Pyridoxine/pyridoxamine 5'-phosphate oxidase">
    <location>
        <begin position="1"/>
        <end position="199"/>
    </location>
</feature>
<feature type="binding site" evidence="1">
    <location>
        <begin position="44"/>
        <end position="49"/>
    </location>
    <ligand>
        <name>FMN</name>
        <dbReference type="ChEBI" id="CHEBI:58210"/>
    </ligand>
</feature>
<feature type="binding site" evidence="1">
    <location>
        <position position="49"/>
    </location>
    <ligand>
        <name>substrate</name>
    </ligand>
</feature>
<feature type="binding site" evidence="1">
    <location>
        <begin position="59"/>
        <end position="60"/>
    </location>
    <ligand>
        <name>FMN</name>
        <dbReference type="ChEBI" id="CHEBI:58210"/>
    </ligand>
</feature>
<feature type="binding site" evidence="1">
    <location>
        <position position="66"/>
    </location>
    <ligand>
        <name>FMN</name>
        <dbReference type="ChEBI" id="CHEBI:58210"/>
    </ligand>
</feature>
<feature type="binding site" evidence="1">
    <location>
        <position position="91"/>
    </location>
    <ligand>
        <name>FMN</name>
        <dbReference type="ChEBI" id="CHEBI:58210"/>
    </ligand>
</feature>
<feature type="binding site" evidence="1">
    <location>
        <position position="109"/>
    </location>
    <ligand>
        <name>substrate</name>
    </ligand>
</feature>
<feature type="binding site" evidence="1">
    <location>
        <position position="113"/>
    </location>
    <ligand>
        <name>substrate</name>
    </ligand>
</feature>
<feature type="binding site" evidence="1">
    <location>
        <position position="117"/>
    </location>
    <ligand>
        <name>substrate</name>
    </ligand>
</feature>
<feature type="binding site" evidence="1">
    <location>
        <begin position="126"/>
        <end position="127"/>
    </location>
    <ligand>
        <name>FMN</name>
        <dbReference type="ChEBI" id="CHEBI:58210"/>
    </ligand>
</feature>
<feature type="binding site" evidence="1">
    <location>
        <position position="171"/>
    </location>
    <ligand>
        <name>FMN</name>
        <dbReference type="ChEBI" id="CHEBI:58210"/>
    </ligand>
</feature>
<feature type="binding site" evidence="1">
    <location>
        <begin position="177"/>
        <end position="179"/>
    </location>
    <ligand>
        <name>substrate</name>
    </ligand>
</feature>
<feature type="binding site" evidence="1">
    <location>
        <position position="181"/>
    </location>
    <ligand>
        <name>FMN</name>
        <dbReference type="ChEBI" id="CHEBI:58210"/>
    </ligand>
</feature>
<evidence type="ECO:0000255" key="1">
    <source>
        <dbReference type="HAMAP-Rule" id="MF_01629"/>
    </source>
</evidence>
<organism>
    <name type="scientific">Xanthomonas oryzae pv. oryzae (strain KACC10331 / KXO85)</name>
    <dbReference type="NCBI Taxonomy" id="291331"/>
    <lineage>
        <taxon>Bacteria</taxon>
        <taxon>Pseudomonadati</taxon>
        <taxon>Pseudomonadota</taxon>
        <taxon>Gammaproteobacteria</taxon>
        <taxon>Lysobacterales</taxon>
        <taxon>Lysobacteraceae</taxon>
        <taxon>Xanthomonas</taxon>
    </lineage>
</organism>